<evidence type="ECO:0000250" key="1">
    <source>
        <dbReference type="UniProtKB" id="E1BPK6"/>
    </source>
</evidence>
<evidence type="ECO:0000250" key="2">
    <source>
        <dbReference type="UniProtKB" id="Q29122"/>
    </source>
</evidence>
<evidence type="ECO:0000250" key="3">
    <source>
        <dbReference type="UniProtKB" id="Q9I8D1"/>
    </source>
</evidence>
<evidence type="ECO:0000250" key="4">
    <source>
        <dbReference type="UniProtKB" id="Q9UM54"/>
    </source>
</evidence>
<evidence type="ECO:0000255" key="5"/>
<evidence type="ECO:0000255" key="6">
    <source>
        <dbReference type="PROSITE-ProRule" id="PRU00782"/>
    </source>
</evidence>
<evidence type="ECO:0000255" key="7">
    <source>
        <dbReference type="PROSITE-ProRule" id="PRU01190"/>
    </source>
</evidence>
<evidence type="ECO:0000256" key="8">
    <source>
        <dbReference type="SAM" id="MobiDB-lite"/>
    </source>
</evidence>
<evidence type="ECO:0000269" key="9">
    <source>
    </source>
</evidence>
<evidence type="ECO:0000269" key="10">
    <source>
    </source>
</evidence>
<evidence type="ECO:0000269" key="11">
    <source>
    </source>
</evidence>
<evidence type="ECO:0000269" key="12">
    <source>
    </source>
</evidence>
<evidence type="ECO:0000269" key="13">
    <source>
    </source>
</evidence>
<evidence type="ECO:0000269" key="14">
    <source>
    </source>
</evidence>
<evidence type="ECO:0000303" key="15">
    <source>
    </source>
</evidence>
<evidence type="ECO:0000305" key="16"/>
<evidence type="ECO:0007744" key="17">
    <source>
    </source>
</evidence>
<evidence type="ECO:0007829" key="18">
    <source>
        <dbReference type="PDB" id="2KIA"/>
    </source>
</evidence>
<evidence type="ECO:0007829" key="19">
    <source>
        <dbReference type="PDB" id="2LD3"/>
    </source>
</evidence>
<evidence type="ECO:0007829" key="20">
    <source>
        <dbReference type="PDB" id="3H8D"/>
    </source>
</evidence>
<evidence type="ECO:0007829" key="21">
    <source>
        <dbReference type="PDB" id="8ARD"/>
    </source>
</evidence>
<sequence>MEDGKPVWAPHPTDGFQMGNIVDIGPDSLTIEPLNQKGKTFLALINQVFPAEEDSKKDVEDNCSLMYLNEATLLHNVKVRYSKDRIYTYVANILIAVNPYFDIPKIYSSDTIKSYQGKSLGTMPPHVFAIADKAFRDMKVLKMSQSIIVSGESGAGKTENTKFVLRYLTESYGTGQDIDDRIVEANPLLEAFGNAKTVRNNNSSRFGKFVEIHFNEKSSVVGGFVSHYLLEKSRICVQGKEERNYHIFYRLCAGASEDIREKLHLSSPDNFRYLNRGCTRFFANKETDKQILQNRKSPEYVKAGSLKDPLLDDHGDFIRMCTAMKKIGLDDEEKLDLFRVVAGVLHLGNIDFEEAGSTSGGCNLKNKSAPSLEYCAELLGLDQDDLRVSLTTRVMLTTAGGTKGTVIKVPLKVEQANNARDALAKTVYSHLFDHVVNRVNQCFPFETSSYFIGVLDIAGFEYFEHNSFEQFCINYCNEKLQQFFNERILKEEQELYQKEGLGVNEVHYVDNQDCIDLIEVKLVGILDILDEENRLPQPSDQHFTSVVHQKHKDHFRLTIPRKSKLAVHRNLRDDEGFIIRHFAGAVCYETTQFVEKNNDALHMSLESLICESRDKFIRALFESSTNNNKDTKQKAGKLSFISVGNKFKTQLNLLLDKLRSTGASFIRCIKPNLKMTSHHFEGAQILSQLQCSGMVSVLDLMQGGFPSRASFHELYNMYKKYMPEKLARLDPRLFCKALFKALGLNEVDYKFGLTKVFFRPGKFAEFDQIMKSDPDHLAELVKRVNLWLVCSRWKKVQWCSLSVIKLKNKIKYRAEACIKMQKTIRMWLCKRRHKPRIDGLVKVGTLKKRLDKFNEVVSALKDGKPEVNRQIKNLEISIDALMAKIKSTMMTREQIQKEYDALVKSSEDLLSALQKKKQQEEEAERLRRIQEEMEKERKRREEDEERRRKEEEERRMKLEMEAKRKQEEEERKKREDDEKRIQAEVEAQLARQREEESQQQAVLAQECRDRELALRIAQNESELISDEAQGDMALRRGPAVQATKAAAGTKKHDLSKWKYAELRDTINTSCDIELLAACREEFHRRLKVYHAWKSKNKKRNTETEQRAPKSVTDYDFAPFLNNSPQQNPAAQLPARQQEIDMKRQQRFFRIPFIRPADQYKDPQNKKKGWWYAHFDGPWIARQMELHPDKPPILLVAGKDDMEMCELNLEETGLTRKRGAEILPRQFEEIWERCGGIQYLQSAIESRQARPTYATAMLQNLLK</sequence>
<comment type="function">
    <text evidence="2 4 9 11 13 14">Myosins are actin-based motor molecules with ATPase activity (PubMed:11906161). Unconventional myosins serve in intracellular movements (PubMed:11906161). Myosin 6 is a reverse-direction motor protein that moves towards the minus-end of actin filaments (By similarity). Has slow rate of actin-activated ADP release due to weak ATP binding (By similarity). Functions in a variety of intracellular processes such as vesicular membrane trafficking and cell migration (By similarity). Required for the structural integrity of the Golgi apparatus via the p53-dependent pro-survival pathway (By similarity). Appears to be involved in a very early step of clathrin-mediated endocytosis in polarized epithelial cells (By similarity). Together with TOM1, mediates delivery of endocytic cargo to autophagosomes thereby promoting autophagosome maturation and driving fusion with lysosomes (By similarity). Links TOM1 with autophagy receptors, such as TAX1BP1; CALCOCO2/NDP52 and OPTN (By similarity). May act as a regulator of F-actin dynamics (By similarity). As part of the DISP complex, may regulate the association of septins with actin and thereby regulate the actin cytoskeleton (By similarity). May play a role in transporting DAB2 from the plasma membrane to specific cellular targets (PubMed:11906161). May play a role in the extension and network organization of neurites (PubMed:22039235). Required for structural integrity of inner ear hair cells (PubMed:7493015). Required for the correct localization of CLIC5 and RDX at the stereocilium base (PubMed:24285636). Modulates RNA polymerase II-dependent transcription (By similarity).</text>
</comment>
<comment type="subunit">
    <text evidence="1 2 3 4 9 13">Homodimer; dimerization seems to implicate the unfolding of the three-helix bundle region creating an additional calmodulin binding site, and cargo binding (By similarity). Able to function as a monomer under specific conditions in vitro (By similarity). Forms a complex with CFTR and DAB2 in the apical membrane of epithelial cells (By similarity). Component of the DISP/DOCK7-induced septin displacement complex, at least composed of DOCK7, LRCH3 and MYO6 (By similarity). Binding to calmodulin through a unique insert, not found in other myosins, located in the neck region between the motor domain and the IQ domain appears to contribute to the directionality reversal (By similarity). This interaction occurs only if the C-terminal lobe of calmodulin is occupied by calcium (By similarity). Interaction with F-actin/ACTN1 occurs only at the apical brush border domain of the proximal tubule cells (By similarity). Interacts with DAB2 (PubMed:11906161). In vitro, the C-terminal globular tail binds a C-terminal region of DAB2 (PubMed:11906161). Interacts with CFTR (By similarity). Interacts with CABP5 (By similarity). Interacts (via residues 1128-1256) with TOM1 (via residues 392-463) (By similarity). Interacts (via residues 1060-1285) with OPTN (By similarity). Interacts (via residues 1060-1285) with TAX1BP1 and CALCOCO2/NDP52 (By similarity). Interacts with TOM1L2 (By similarity). Interacts with CLIC5; may work together in a complex which also includes RDX and MYO6 to stabilize linkages between the plasma membrane and subjacent actin cytoskeleton at the base of stereocilia (PubMed:24285636).</text>
</comment>
<comment type="subcellular location">
    <subcellularLocation>
        <location evidence="4">Golgi apparatus</location>
        <location evidence="4">trans-Golgi network membrane</location>
        <topology evidence="4">Peripheral membrane protein</topology>
    </subcellularLocation>
    <subcellularLocation>
        <location evidence="4">Golgi apparatus</location>
    </subcellularLocation>
    <subcellularLocation>
        <location evidence="4">Nucleus</location>
    </subcellularLocation>
    <subcellularLocation>
        <location evidence="4">Cytoplasm</location>
        <location evidence="4">Perinuclear region</location>
    </subcellularLocation>
    <subcellularLocation>
        <location evidence="4">Membrane</location>
        <location evidence="4">Clathrin-coated pit</location>
    </subcellularLocation>
    <subcellularLocation>
        <location evidence="4">Cytoplasmic vesicle</location>
        <location evidence="4">Clathrin-coated vesicle</location>
    </subcellularLocation>
    <subcellularLocation>
        <location evidence="4">Cell projection</location>
        <location evidence="4">Filopodium</location>
    </subcellularLocation>
    <subcellularLocation>
        <location evidence="4">Cell projection</location>
        <location evidence="4">Ruffle membrane</location>
    </subcellularLocation>
    <subcellularLocation>
        <location evidence="4">Cell projection</location>
        <location evidence="4">Microvillus</location>
    </subcellularLocation>
    <subcellularLocation>
        <location evidence="2">Cytoplasm</location>
        <location evidence="2">Cytosol</location>
    </subcellularLocation>
    <text evidence="3 4">Also present in endocyctic vesicles (By similarity). Translocates from membrane ruffles, endocytic vesicles and cytoplasm to Golgi apparatus, perinuclear membrane and nucleus through induction by p53 and p53-induced DNA damage (By similarity). Recruited into membrane ruffles from cell surface by EGF-stimulation (By similarity). Colocalizes with DAB2 in clathrin-coated pits/vesicles (By similarity). Colocalizes with OPTN at the Golgi complex and in vesicular structures close to the plasma membrane (By similarity).</text>
</comment>
<comment type="tissue specificity">
    <text evidence="11 14">Within the cochlea, expressed specifically within the sensory hair cells (at protein level) (PubMed:7493015). Expressed in the inner and outer plexiform layer of the retina (at protein level) (PubMed:22039235). Widely expressed (PubMed:7493015). Expressed in the brain, kidney, liver, and testis (PubMed:7493015).</text>
</comment>
<comment type="domain">
    <text evidence="2">Divided into three regions: a N-terminal motor (head) domain, followed by a neck domain consisting of a calmodulin-binding linker domain and a single IQ motif, and a C-terminal tail region with a three-helix bundle region, a SAH domain and a unique globular domain required for interaction with other proteins such as cargo-binding.</text>
</comment>
<comment type="domain">
    <text evidence="4">The SAH (single alpha-helix) region is characterized by a high content of charged residues which are predicted to stabilize the alpha-helical structure by ionic bonds (By similarity). Its contribution to the mechanism conferring the myosin movement on actin filaments is debated (By similarity).</text>
</comment>
<comment type="PTM">
    <text evidence="4">Phosphorylation in the motor domain, induced by EGF, results in translocation of MYO6 from the cell surface to membrane ruffles and affects F-actin dynamics. Phosphorylated in vitro by p21-activated kinase (PAK).</text>
</comment>
<comment type="disease">
    <text evidence="14">Defects in Myo6 are the cause of Snell's waltzer, a condition characterized by circling, head-tossing, deafness and hyperactivity.</text>
</comment>
<comment type="disruption phenotype">
    <text evidence="10 12">Mice display hearing loss, hyperactivity and circling behavior, suggesting vestibular defects. Higher steady state levels of LC3-II, indicating defciciency in autophagy (PubMed:23023224).</text>
</comment>
<comment type="similarity">
    <text evidence="16">Belongs to the TRAFAC class myosin-kinesin ATPase superfamily. Myosin family.</text>
</comment>
<comment type="caution">
    <text evidence="16">Represents an unconventional myosin. This protein should not be confused with the conventional myosin-6 (MYH6).</text>
</comment>
<comment type="caution">
    <text evidence="16">Originally predicted to contain a coiled coil domain but generally accepted to contain a stable SAH domain instead.</text>
</comment>
<comment type="sequence caution" evidence="16">
    <conflict type="frameshift">
        <sequence resource="EMBL-CDS" id="AAB00194"/>
    </conflict>
</comment>
<dbReference type="EMBL" id="U49739">
    <property type="protein sequence ID" value="AAB00194.1"/>
    <property type="status" value="ALT_FRAME"/>
    <property type="molecule type" value="mRNA"/>
</dbReference>
<dbReference type="EMBL" id="AC159738">
    <property type="status" value="NOT_ANNOTATED_CDS"/>
    <property type="molecule type" value="Genomic_DNA"/>
</dbReference>
<dbReference type="EMBL" id="AC120388">
    <property type="status" value="NOT_ANNOTATED_CDS"/>
    <property type="molecule type" value="Genomic_DNA"/>
</dbReference>
<dbReference type="CCDS" id="CCDS23368.1"/>
<dbReference type="PIR" id="A59299">
    <property type="entry name" value="A59299"/>
</dbReference>
<dbReference type="RefSeq" id="NP_001034635.2">
    <property type="nucleotide sequence ID" value="NM_001039546.3"/>
</dbReference>
<dbReference type="PDB" id="2KIA">
    <property type="method" value="NMR"/>
    <property type="chains" value="A=1134-1262"/>
</dbReference>
<dbReference type="PDB" id="2LD3">
    <property type="method" value="NMR"/>
    <property type="chains" value="A=840-922"/>
</dbReference>
<dbReference type="PDB" id="3H8D">
    <property type="method" value="X-ray"/>
    <property type="resolution" value="2.20 A"/>
    <property type="chains" value="A/B/C/D=1134-1262"/>
</dbReference>
<dbReference type="PDB" id="5V6E">
    <property type="method" value="X-ray"/>
    <property type="resolution" value="3.51 A"/>
    <property type="chains" value="B/D/F/H/J=1052-1096"/>
</dbReference>
<dbReference type="PDB" id="5V6H">
    <property type="method" value="X-ray"/>
    <property type="resolution" value="3.60 A"/>
    <property type="chains" value="B/D/F/H/J=1052-1096"/>
</dbReference>
<dbReference type="PDB" id="8ARD">
    <property type="method" value="X-ray"/>
    <property type="resolution" value="2.22 A"/>
    <property type="chains" value="A=876-940"/>
</dbReference>
<dbReference type="PDBsum" id="2KIA"/>
<dbReference type="PDBsum" id="2LD3"/>
<dbReference type="PDBsum" id="3H8D"/>
<dbReference type="PDBsum" id="5V6E"/>
<dbReference type="PDBsum" id="5V6H"/>
<dbReference type="PDBsum" id="8ARD"/>
<dbReference type="BMRB" id="Q64331"/>
<dbReference type="SMR" id="Q64331"/>
<dbReference type="FunCoup" id="Q64331">
    <property type="interactions" value="838"/>
</dbReference>
<dbReference type="IntAct" id="Q64331">
    <property type="interactions" value="7"/>
</dbReference>
<dbReference type="MINT" id="Q64331"/>
<dbReference type="STRING" id="10090.ENSMUSP00000036181"/>
<dbReference type="GlyGen" id="Q64331">
    <property type="glycosylation" value="3 sites, 1 N-linked glycan (1 site), 1 O-linked glycan (1 site)"/>
</dbReference>
<dbReference type="iPTMnet" id="Q64331"/>
<dbReference type="PhosphoSitePlus" id="Q64331"/>
<dbReference type="SwissPalm" id="Q64331"/>
<dbReference type="jPOST" id="Q64331"/>
<dbReference type="PaxDb" id="10090-ENSMUSP00000036181"/>
<dbReference type="PeptideAtlas" id="Q64331"/>
<dbReference type="ProteomicsDB" id="286130"/>
<dbReference type="ProteomicsDB" id="320322"/>
<dbReference type="Pumba" id="Q64331"/>
<dbReference type="Antibodypedia" id="4385">
    <property type="antibodies" value="144 antibodies from 28 providers"/>
</dbReference>
<dbReference type="DNASU" id="17920"/>
<dbReference type="Ensembl" id="ENSMUST00000035889.15">
    <property type="protein sequence ID" value="ENSMUSP00000036181.9"/>
    <property type="gene ID" value="ENSMUSG00000033577.19"/>
</dbReference>
<dbReference type="GeneID" id="17920"/>
<dbReference type="KEGG" id="mmu:17920"/>
<dbReference type="AGR" id="MGI:104785"/>
<dbReference type="CTD" id="4646"/>
<dbReference type="MGI" id="MGI:104785">
    <property type="gene designation" value="Myo6"/>
</dbReference>
<dbReference type="VEuPathDB" id="HostDB:ENSMUSG00000033577"/>
<dbReference type="eggNOG" id="KOG0163">
    <property type="taxonomic scope" value="Eukaryota"/>
</dbReference>
<dbReference type="GeneTree" id="ENSGT00940000156078"/>
<dbReference type="InParanoid" id="Q64331"/>
<dbReference type="OMA" id="LNKGCTQ"/>
<dbReference type="PhylomeDB" id="Q64331"/>
<dbReference type="TreeFam" id="TF351449"/>
<dbReference type="Reactome" id="R-MMU-190873">
    <property type="pathway name" value="Gap junction degradation"/>
</dbReference>
<dbReference type="Reactome" id="R-MMU-399719">
    <property type="pathway name" value="Trafficking of AMPA receptors"/>
</dbReference>
<dbReference type="Reactome" id="R-MMU-9013418">
    <property type="pathway name" value="RHOBTB2 GTPase cycle"/>
</dbReference>
<dbReference type="Reactome" id="R-MMU-9013420">
    <property type="pathway name" value="RHOU GTPase cycle"/>
</dbReference>
<dbReference type="Reactome" id="R-MMU-9013422">
    <property type="pathway name" value="RHOBTB1 GTPase cycle"/>
</dbReference>
<dbReference type="BioGRID-ORCS" id="17920">
    <property type="hits" value="1 hit in 60 CRISPR screens"/>
</dbReference>
<dbReference type="CD-CODE" id="CE726F99">
    <property type="entry name" value="Postsynaptic density"/>
</dbReference>
<dbReference type="ChiTaRS" id="Myo6">
    <property type="organism name" value="mouse"/>
</dbReference>
<dbReference type="EvolutionaryTrace" id="Q64331"/>
<dbReference type="PRO" id="PR:Q64331"/>
<dbReference type="Proteomes" id="UP000000589">
    <property type="component" value="Chromosome 9"/>
</dbReference>
<dbReference type="RNAct" id="Q64331">
    <property type="molecule type" value="protein"/>
</dbReference>
<dbReference type="Bgee" id="ENSMUSG00000033577">
    <property type="expression patterns" value="Expressed in olfactory epithelium and 244 other cell types or tissues"/>
</dbReference>
<dbReference type="GO" id="GO:0030424">
    <property type="term" value="C:axon"/>
    <property type="evidence" value="ECO:0000314"/>
    <property type="project" value="MGI"/>
</dbReference>
<dbReference type="GO" id="GO:0005903">
    <property type="term" value="C:brush border"/>
    <property type="evidence" value="ECO:0000314"/>
    <property type="project" value="UniProtKB"/>
</dbReference>
<dbReference type="GO" id="GO:0005905">
    <property type="term" value="C:clathrin-coated pit"/>
    <property type="evidence" value="ECO:0007669"/>
    <property type="project" value="UniProtKB-SubCell"/>
</dbReference>
<dbReference type="GO" id="GO:0030136">
    <property type="term" value="C:clathrin-coated vesicle"/>
    <property type="evidence" value="ECO:0007669"/>
    <property type="project" value="UniProtKB-SubCell"/>
</dbReference>
<dbReference type="GO" id="GO:0098683">
    <property type="term" value="C:cochlear hair cell ribbon synapse"/>
    <property type="evidence" value="ECO:0000314"/>
    <property type="project" value="SynGO"/>
</dbReference>
<dbReference type="GO" id="GO:0005737">
    <property type="term" value="C:cytoplasm"/>
    <property type="evidence" value="ECO:0000314"/>
    <property type="project" value="MGI"/>
</dbReference>
<dbReference type="GO" id="GO:0005829">
    <property type="term" value="C:cytosol"/>
    <property type="evidence" value="ECO:0007669"/>
    <property type="project" value="UniProtKB-SubCell"/>
</dbReference>
<dbReference type="GO" id="GO:0030175">
    <property type="term" value="C:filopodium"/>
    <property type="evidence" value="ECO:0007669"/>
    <property type="project" value="UniProtKB-SubCell"/>
</dbReference>
<dbReference type="GO" id="GO:0098978">
    <property type="term" value="C:glutamatergic synapse"/>
    <property type="evidence" value="ECO:0000314"/>
    <property type="project" value="SynGO"/>
</dbReference>
<dbReference type="GO" id="GO:0005794">
    <property type="term" value="C:Golgi apparatus"/>
    <property type="evidence" value="ECO:0007669"/>
    <property type="project" value="UniProtKB-SubCell"/>
</dbReference>
<dbReference type="GO" id="GO:0005902">
    <property type="term" value="C:microvillus"/>
    <property type="evidence" value="ECO:0007669"/>
    <property type="project" value="UniProtKB-SubCell"/>
</dbReference>
<dbReference type="GO" id="GO:0016459">
    <property type="term" value="C:myosin complex"/>
    <property type="evidence" value="ECO:0007669"/>
    <property type="project" value="UniProtKB-KW"/>
</dbReference>
<dbReference type="GO" id="GO:0043025">
    <property type="term" value="C:neuronal cell body"/>
    <property type="evidence" value="ECO:0000314"/>
    <property type="project" value="MGI"/>
</dbReference>
<dbReference type="GO" id="GO:0005634">
    <property type="term" value="C:nucleus"/>
    <property type="evidence" value="ECO:0007669"/>
    <property type="project" value="UniProtKB-SubCell"/>
</dbReference>
<dbReference type="GO" id="GO:0048471">
    <property type="term" value="C:perinuclear region of cytoplasm"/>
    <property type="evidence" value="ECO:0000314"/>
    <property type="project" value="MGI"/>
</dbReference>
<dbReference type="GO" id="GO:0005886">
    <property type="term" value="C:plasma membrane"/>
    <property type="evidence" value="ECO:0000353"/>
    <property type="project" value="MGI"/>
</dbReference>
<dbReference type="GO" id="GO:0098871">
    <property type="term" value="C:postsynaptic actin cytoskeleton"/>
    <property type="evidence" value="ECO:0000314"/>
    <property type="project" value="SynGO"/>
</dbReference>
<dbReference type="GO" id="GO:0014069">
    <property type="term" value="C:postsynaptic density"/>
    <property type="evidence" value="ECO:0000314"/>
    <property type="project" value="SynGO"/>
</dbReference>
<dbReference type="GO" id="GO:0098833">
    <property type="term" value="C:presynaptic endocytic zone"/>
    <property type="evidence" value="ECO:0000314"/>
    <property type="project" value="SynGO"/>
</dbReference>
<dbReference type="GO" id="GO:0032587">
    <property type="term" value="C:ruffle membrane"/>
    <property type="evidence" value="ECO:0007669"/>
    <property type="project" value="UniProtKB-SubCell"/>
</dbReference>
<dbReference type="GO" id="GO:0098685">
    <property type="term" value="C:Schaffer collateral - CA1 synapse"/>
    <property type="evidence" value="ECO:0000314"/>
    <property type="project" value="SynGO"/>
</dbReference>
<dbReference type="GO" id="GO:0045202">
    <property type="term" value="C:synapse"/>
    <property type="evidence" value="ECO:0000266"/>
    <property type="project" value="MGI"/>
</dbReference>
<dbReference type="GO" id="GO:0012506">
    <property type="term" value="C:vesicle membrane"/>
    <property type="evidence" value="ECO:0000353"/>
    <property type="project" value="MGI"/>
</dbReference>
<dbReference type="GO" id="GO:0051015">
    <property type="term" value="F:actin filament binding"/>
    <property type="evidence" value="ECO:0000266"/>
    <property type="project" value="MGI"/>
</dbReference>
<dbReference type="GO" id="GO:0005524">
    <property type="term" value="F:ATP binding"/>
    <property type="evidence" value="ECO:0007669"/>
    <property type="project" value="UniProtKB-KW"/>
</dbReference>
<dbReference type="GO" id="GO:0005516">
    <property type="term" value="F:calmodulin binding"/>
    <property type="evidence" value="ECO:0007669"/>
    <property type="project" value="UniProtKB-KW"/>
</dbReference>
<dbReference type="GO" id="GO:0003774">
    <property type="term" value="F:cytoskeletal motor activity"/>
    <property type="evidence" value="ECO:0007669"/>
    <property type="project" value="InterPro"/>
</dbReference>
<dbReference type="GO" id="GO:0071257">
    <property type="term" value="P:cellular response to electrical stimulus"/>
    <property type="evidence" value="ECO:0000315"/>
    <property type="project" value="MGI"/>
</dbReference>
<dbReference type="GO" id="GO:0007268">
    <property type="term" value="P:chemical synaptic transmission"/>
    <property type="evidence" value="ECO:0000315"/>
    <property type="project" value="MGI"/>
</dbReference>
<dbReference type="GO" id="GO:0016358">
    <property type="term" value="P:dendrite development"/>
    <property type="evidence" value="ECO:0000315"/>
    <property type="project" value="MGI"/>
</dbReference>
<dbReference type="GO" id="GO:0006897">
    <property type="term" value="P:endocytosis"/>
    <property type="evidence" value="ECO:0000315"/>
    <property type="project" value="MGI"/>
</dbReference>
<dbReference type="GO" id="GO:0014047">
    <property type="term" value="P:glutamate secretion"/>
    <property type="evidence" value="ECO:0000315"/>
    <property type="project" value="MGI"/>
</dbReference>
<dbReference type="GO" id="GO:0042491">
    <property type="term" value="P:inner ear auditory receptor cell differentiation"/>
    <property type="evidence" value="ECO:0000315"/>
    <property type="project" value="MGI"/>
</dbReference>
<dbReference type="GO" id="GO:0048839">
    <property type="term" value="P:inner ear development"/>
    <property type="evidence" value="ECO:0000315"/>
    <property type="project" value="MGI"/>
</dbReference>
<dbReference type="GO" id="GO:0042472">
    <property type="term" value="P:inner ear morphogenesis"/>
    <property type="evidence" value="ECO:0000315"/>
    <property type="project" value="MGI"/>
</dbReference>
<dbReference type="GO" id="GO:0007626">
    <property type="term" value="P:locomotory behavior"/>
    <property type="evidence" value="ECO:0000315"/>
    <property type="project" value="MGI"/>
</dbReference>
<dbReference type="GO" id="GO:0098884">
    <property type="term" value="P:postsynaptic neurotransmitter receptor internalization"/>
    <property type="evidence" value="ECO:0000314"/>
    <property type="project" value="SynGO"/>
</dbReference>
<dbReference type="GO" id="GO:0099171">
    <property type="term" value="P:presynaptic modulation of chemical synaptic transmission"/>
    <property type="evidence" value="ECO:0000314"/>
    <property type="project" value="SynGO"/>
</dbReference>
<dbReference type="GO" id="GO:0008104">
    <property type="term" value="P:protein localization"/>
    <property type="evidence" value="ECO:0000315"/>
    <property type="project" value="UniProtKB"/>
</dbReference>
<dbReference type="GO" id="GO:0006605">
    <property type="term" value="P:protein targeting"/>
    <property type="evidence" value="ECO:0000353"/>
    <property type="project" value="MGI"/>
</dbReference>
<dbReference type="GO" id="GO:0015031">
    <property type="term" value="P:protein transport"/>
    <property type="evidence" value="ECO:0007669"/>
    <property type="project" value="UniProtKB-KW"/>
</dbReference>
<dbReference type="GO" id="GO:0048167">
    <property type="term" value="P:regulation of synaptic plasticity"/>
    <property type="evidence" value="ECO:0000315"/>
    <property type="project" value="MGI"/>
</dbReference>
<dbReference type="GO" id="GO:0007605">
    <property type="term" value="P:sensory perception of sound"/>
    <property type="evidence" value="ECO:0000315"/>
    <property type="project" value="MGI"/>
</dbReference>
<dbReference type="GO" id="GO:0007416">
    <property type="term" value="P:synapse assembly"/>
    <property type="evidence" value="ECO:0000315"/>
    <property type="project" value="MGI"/>
</dbReference>
<dbReference type="CDD" id="cd21759">
    <property type="entry name" value="CBD_MYO6-like"/>
    <property type="match status" value="1"/>
</dbReference>
<dbReference type="CDD" id="cd22294">
    <property type="entry name" value="MYO6_MIU_linker"/>
    <property type="match status" value="1"/>
</dbReference>
<dbReference type="CDD" id="cd01382">
    <property type="entry name" value="MYSc_Myo6"/>
    <property type="match status" value="1"/>
</dbReference>
<dbReference type="CDD" id="cd21958">
    <property type="entry name" value="MyUb_Myo6"/>
    <property type="match status" value="1"/>
</dbReference>
<dbReference type="FunFam" id="1.20.58.530:FF:000006">
    <property type="entry name" value="Putative unconventional myosin-VI"/>
    <property type="match status" value="1"/>
</dbReference>
<dbReference type="FunFam" id="2.30.30.360:FF:000002">
    <property type="entry name" value="Unconventional myosin-VI"/>
    <property type="match status" value="1"/>
</dbReference>
<dbReference type="FunFam" id="1.20.120.720:FF:000005">
    <property type="entry name" value="unconventional myosin-VI isoform X1"/>
    <property type="match status" value="1"/>
</dbReference>
<dbReference type="FunFam" id="3.30.70.1590:FF:000002">
    <property type="entry name" value="unconventional myosin-VI isoform X1"/>
    <property type="match status" value="1"/>
</dbReference>
<dbReference type="FunFam" id="3.40.850.10:FF:000018">
    <property type="entry name" value="unconventional myosin-VI isoform X1"/>
    <property type="match status" value="1"/>
</dbReference>
<dbReference type="FunFam" id="3.40.850.10:FF:000030">
    <property type="entry name" value="unconventional myosin-VI isoform X1"/>
    <property type="match status" value="1"/>
</dbReference>
<dbReference type="FunFam" id="1.10.10.820:FF:000005">
    <property type="entry name" value="unconventional myosin-VI isoform X2"/>
    <property type="match status" value="1"/>
</dbReference>
<dbReference type="Gene3D" id="1.10.10.820">
    <property type="match status" value="1"/>
</dbReference>
<dbReference type="Gene3D" id="1.20.58.530">
    <property type="match status" value="1"/>
</dbReference>
<dbReference type="Gene3D" id="3.30.70.1590">
    <property type="match status" value="1"/>
</dbReference>
<dbReference type="Gene3D" id="6.10.220.10">
    <property type="match status" value="1"/>
</dbReference>
<dbReference type="Gene3D" id="3.40.850.10">
    <property type="entry name" value="Kinesin motor domain"/>
    <property type="match status" value="2"/>
</dbReference>
<dbReference type="Gene3D" id="2.30.30.360">
    <property type="entry name" value="Myosin S1 fragment, N-terminal"/>
    <property type="match status" value="1"/>
</dbReference>
<dbReference type="Gene3D" id="1.20.120.720">
    <property type="entry name" value="Myosin VI head, motor domain, U50 subdomain"/>
    <property type="match status" value="1"/>
</dbReference>
<dbReference type="InterPro" id="IPR036961">
    <property type="entry name" value="Kinesin_motor_dom_sf"/>
</dbReference>
<dbReference type="InterPro" id="IPR049016">
    <property type="entry name" value="MYO6_lever"/>
</dbReference>
<dbReference type="InterPro" id="IPR032412">
    <property type="entry name" value="Myosin-VI_CBD"/>
</dbReference>
<dbReference type="InterPro" id="IPR001609">
    <property type="entry name" value="Myosin_head_motor_dom-like"/>
</dbReference>
<dbReference type="InterPro" id="IPR004009">
    <property type="entry name" value="Myosin_N"/>
</dbReference>
<dbReference type="InterPro" id="IPR008989">
    <property type="entry name" value="Myosin_S1_N"/>
</dbReference>
<dbReference type="InterPro" id="IPR036114">
    <property type="entry name" value="MYSc_Myo6"/>
</dbReference>
<dbReference type="InterPro" id="IPR027417">
    <property type="entry name" value="P-loop_NTPase"/>
</dbReference>
<dbReference type="PANTHER" id="PTHR13140">
    <property type="entry name" value="MYOSIN"/>
    <property type="match status" value="1"/>
</dbReference>
<dbReference type="PANTHER" id="PTHR13140:SF745">
    <property type="entry name" value="UNCONVENTIONAL MYOSIN-VI"/>
    <property type="match status" value="1"/>
</dbReference>
<dbReference type="Pfam" id="PF21521">
    <property type="entry name" value="MYO6_lever"/>
    <property type="match status" value="1"/>
</dbReference>
<dbReference type="Pfam" id="PF16521">
    <property type="entry name" value="Myosin-VI_CBD"/>
    <property type="match status" value="1"/>
</dbReference>
<dbReference type="Pfam" id="PF00063">
    <property type="entry name" value="Myosin_head"/>
    <property type="match status" value="1"/>
</dbReference>
<dbReference type="PRINTS" id="PR00193">
    <property type="entry name" value="MYOSINHEAVY"/>
</dbReference>
<dbReference type="SMART" id="SM00242">
    <property type="entry name" value="MYSc"/>
    <property type="match status" value="1"/>
</dbReference>
<dbReference type="SUPFAM" id="SSF52540">
    <property type="entry name" value="P-loop containing nucleoside triphosphate hydrolases"/>
    <property type="match status" value="1"/>
</dbReference>
<dbReference type="PROSITE" id="PS51456">
    <property type="entry name" value="MYOSIN_MOTOR"/>
    <property type="match status" value="1"/>
</dbReference>
<dbReference type="PROSITE" id="PS51844">
    <property type="entry name" value="SH3_LIKE"/>
    <property type="match status" value="1"/>
</dbReference>
<accession>Q64331</accession>
<accession>E9Q3L1</accession>
<keyword id="KW-0002">3D-structure</keyword>
<keyword id="KW-0009">Actin-binding</keyword>
<keyword id="KW-0067">ATP-binding</keyword>
<keyword id="KW-0112">Calmodulin-binding</keyword>
<keyword id="KW-1003">Cell membrane</keyword>
<keyword id="KW-0966">Cell projection</keyword>
<keyword id="KW-0168">Coated pit</keyword>
<keyword id="KW-0175">Coiled coil</keyword>
<keyword id="KW-0963">Cytoplasm</keyword>
<keyword id="KW-0968">Cytoplasmic vesicle</keyword>
<keyword id="KW-0209">Deafness</keyword>
<keyword id="KW-0225">Disease variant</keyword>
<keyword id="KW-0254">Endocytosis</keyword>
<keyword id="KW-0333">Golgi apparatus</keyword>
<keyword id="KW-1009">Hearing</keyword>
<keyword id="KW-0472">Membrane</keyword>
<keyword id="KW-0505">Motor protein</keyword>
<keyword id="KW-0518">Myosin</keyword>
<keyword id="KW-0547">Nucleotide-binding</keyword>
<keyword id="KW-0539">Nucleus</keyword>
<keyword id="KW-0597">Phosphoprotein</keyword>
<keyword id="KW-0653">Protein transport</keyword>
<keyword id="KW-1185">Reference proteome</keyword>
<keyword id="KW-0813">Transport</keyword>
<organism>
    <name type="scientific">Mus musculus</name>
    <name type="common">Mouse</name>
    <dbReference type="NCBI Taxonomy" id="10090"/>
    <lineage>
        <taxon>Eukaryota</taxon>
        <taxon>Metazoa</taxon>
        <taxon>Chordata</taxon>
        <taxon>Craniata</taxon>
        <taxon>Vertebrata</taxon>
        <taxon>Euteleostomi</taxon>
        <taxon>Mammalia</taxon>
        <taxon>Eutheria</taxon>
        <taxon>Euarchontoglires</taxon>
        <taxon>Glires</taxon>
        <taxon>Rodentia</taxon>
        <taxon>Myomorpha</taxon>
        <taxon>Muroidea</taxon>
        <taxon>Muridae</taxon>
        <taxon>Murinae</taxon>
        <taxon>Mus</taxon>
        <taxon>Mus</taxon>
    </lineage>
</organism>
<reference key="1">
    <citation type="journal article" date="1995" name="Nat. Genet.">
        <title>The mouse Snell's waltzer deafness gene encodes an unconventional myosin required for structural integrity of inner ear hair cells.</title>
        <authorList>
            <person name="Avraham K.B."/>
            <person name="Hasson T."/>
            <person name="Steel K.P."/>
            <person name="Kingsley D.M."/>
            <person name="Russell L.B."/>
            <person name="Mooseker M.S."/>
            <person name="Copeland N.G."/>
            <person name="Jenkins N.A."/>
        </authorList>
    </citation>
    <scope>NUCLEOTIDE SEQUENCE [MRNA]</scope>
    <scope>FUNCTION</scope>
    <scope>TISSUE SPECIFICITY</scope>
    <scope>VARIANT SNELL'S WALTZER 763-PHE--LYS-1262 DEL</scope>
    <source>
        <tissue>Brain</tissue>
    </source>
</reference>
<reference key="2">
    <citation type="journal article" date="2009" name="PLoS Biol.">
        <title>Lineage-specific biology revealed by a finished genome assembly of the mouse.</title>
        <authorList>
            <person name="Church D.M."/>
            <person name="Goodstadt L."/>
            <person name="Hillier L.W."/>
            <person name="Zody M.C."/>
            <person name="Goldstein S."/>
            <person name="She X."/>
            <person name="Bult C.J."/>
            <person name="Agarwala R."/>
            <person name="Cherry J.L."/>
            <person name="DiCuccio M."/>
            <person name="Hlavina W."/>
            <person name="Kapustin Y."/>
            <person name="Meric P."/>
            <person name="Maglott D."/>
            <person name="Birtle Z."/>
            <person name="Marques A.C."/>
            <person name="Graves T."/>
            <person name="Zhou S."/>
            <person name="Teague B."/>
            <person name="Potamousis K."/>
            <person name="Churas C."/>
            <person name="Place M."/>
            <person name="Herschleb J."/>
            <person name="Runnheim R."/>
            <person name="Forrest D."/>
            <person name="Amos-Landgraf J."/>
            <person name="Schwartz D.C."/>
            <person name="Cheng Z."/>
            <person name="Lindblad-Toh K."/>
            <person name="Eichler E.E."/>
            <person name="Ponting C.P."/>
        </authorList>
    </citation>
    <scope>NUCLEOTIDE SEQUENCE [LARGE SCALE GENOMIC DNA]</scope>
    <source>
        <strain>C57BL/6J</strain>
    </source>
</reference>
<reference key="3">
    <citation type="journal article" date="2002" name="Biochem. Biophys. Res. Commun.">
        <title>DOC-2/DAB2 is the binding partner of myosin VI.</title>
        <authorList>
            <person name="Inoue A."/>
            <person name="Sato O."/>
            <person name="Homma K."/>
            <person name="Ikebe M."/>
        </authorList>
    </citation>
    <scope>FUNCTION</scope>
    <scope>INTERACTION WITH DAB2</scope>
    <scope>SUBCELLULAR LOCATION</scope>
</reference>
<reference key="4">
    <citation type="journal article" date="2007" name="J. Neurosci.">
        <title>A forward genetics screen in mice identifies recessive deafness traits and reveals that pejvakin is essential for outer hair cell function.</title>
        <authorList>
            <person name="Schwander M."/>
            <person name="Sczaniecka A."/>
            <person name="Grillet N."/>
            <person name="Bailey J.S."/>
            <person name="Avenarius M."/>
            <person name="Najmabadi H."/>
            <person name="Steffy B.M."/>
            <person name="Federe G.C."/>
            <person name="Lagler E.A."/>
            <person name="Banan R."/>
            <person name="Hice R."/>
            <person name="Grabowski-Boase L."/>
            <person name="Keithley E.M."/>
            <person name="Ryan A.F."/>
            <person name="Housley G.D."/>
            <person name="Wiltshire T."/>
            <person name="Smith R.J."/>
            <person name="Tarantino L.M."/>
            <person name="Mueller U."/>
        </authorList>
    </citation>
    <scope>DISRUPTION PHENOTYPE</scope>
</reference>
<reference key="5">
    <citation type="journal article" date="2010" name="Cell">
        <title>A tissue-specific atlas of mouse protein phosphorylation and expression.</title>
        <authorList>
            <person name="Huttlin E.L."/>
            <person name="Jedrychowski M.P."/>
            <person name="Elias J.E."/>
            <person name="Goswami T."/>
            <person name="Rad R."/>
            <person name="Beausoleil S.A."/>
            <person name="Villen J."/>
            <person name="Haas W."/>
            <person name="Sowa M.E."/>
            <person name="Gygi S.P."/>
        </authorList>
    </citation>
    <scope>PHOSPHORYLATION [LARGE SCALE ANALYSIS] AT SER-604; SER-1025 AND SER-1123</scope>
    <scope>IDENTIFICATION BY MASS SPECTROMETRY [LARGE SCALE ANALYSIS]</scope>
    <source>
        <tissue>Brain</tissue>
        <tissue>Brown adipose tissue</tissue>
        <tissue>Heart</tissue>
        <tissue>Kidney</tissue>
        <tissue>Liver</tissue>
        <tissue>Lung</tissue>
        <tissue>Pancreas</tissue>
        <tissue>Spleen</tissue>
        <tissue>Testis</tissue>
    </source>
</reference>
<reference key="6">
    <citation type="journal article" date="2011" name="Invest. Ophthalmol. Vis. Sci.">
        <title>Insight into the role of Ca2+-binding protein 5 in vesicle exocytosis.</title>
        <authorList>
            <person name="Sokal I."/>
            <person name="Haeseleer F."/>
        </authorList>
    </citation>
    <scope>TISSUE SPECIFICITY</scope>
</reference>
<reference key="7">
    <citation type="journal article" date="2012" name="Nat. Cell Biol.">
        <title>Autophagy receptors link myosin VI to autophagosomes to mediate Tom1-dependent autophagosome maturation and fusion with the lysosome.</title>
        <authorList>
            <person name="Tumbarello D.A."/>
            <person name="Waxse B.J."/>
            <person name="Arden S.D."/>
            <person name="Bright N.A."/>
            <person name="Kendrick-Jones J."/>
            <person name="Buss F."/>
        </authorList>
    </citation>
    <scope>DISRUPTION PHENOTYPE</scope>
</reference>
<reference key="8">
    <citation type="journal article" date="2014" name="Cytoskeleton">
        <title>CLIC5 stabilizes membrane-actin filament linkages at the base of hair cell stereocilia in a molecular complex with radixin, taperin, and myosin VI.</title>
        <authorList>
            <person name="Salles F.T."/>
            <person name="Andrade L.R."/>
            <person name="Tanda S."/>
            <person name="Grati M."/>
            <person name="Plona K.L."/>
            <person name="Gagnon L.H."/>
            <person name="Johnson K.R."/>
            <person name="Kachar B."/>
            <person name="Berryman M.A."/>
        </authorList>
    </citation>
    <scope>FUNCTION</scope>
    <scope>INTERACTION WITH CLIC5</scope>
</reference>
<feature type="chain" id="PRO_0000123465" description="Unconventional myosin-VI">
    <location>
        <begin position="1"/>
        <end position="1262"/>
    </location>
</feature>
<feature type="domain" description="Myosin N-terminal SH3-like" evidence="7">
    <location>
        <begin position="2"/>
        <end position="53"/>
    </location>
</feature>
<feature type="domain" description="Myosin motor" evidence="6">
    <location>
        <begin position="57"/>
        <end position="771"/>
    </location>
</feature>
<feature type="domain" description="IQ" evidence="2">
    <location>
        <begin position="814"/>
        <end position="834"/>
    </location>
</feature>
<feature type="region of interest" description="Responsible for slow ATPase activity" evidence="2">
    <location>
        <begin position="273"/>
        <end position="317"/>
    </location>
</feature>
<feature type="region of interest" description="Actin-binding" evidence="6">
    <location>
        <begin position="651"/>
        <end position="673"/>
    </location>
</feature>
<feature type="region of interest" description="Actin-binding" evidence="5">
    <location>
        <begin position="665"/>
        <end position="672"/>
    </location>
</feature>
<feature type="region of interest" description="Required for binding calmodulin" evidence="2">
    <location>
        <begin position="782"/>
        <end position="810"/>
    </location>
</feature>
<feature type="region of interest" description="Three-helix bundle" evidence="2">
    <location>
        <begin position="835"/>
        <end position="916"/>
    </location>
</feature>
<feature type="region of interest" description="SAH" evidence="4">
    <location>
        <begin position="917"/>
        <end position="984"/>
    </location>
</feature>
<feature type="region of interest" description="Disordered" evidence="8">
    <location>
        <begin position="933"/>
        <end position="955"/>
    </location>
</feature>
<feature type="region of interest" description="Interaction with TAX1BP1 and CALCOCO2/NDP52" evidence="4">
    <location>
        <begin position="1034"/>
        <end position="1253"/>
    </location>
</feature>
<feature type="region of interest" description="Interaction with OPTN" evidence="3">
    <location>
        <begin position="1084"/>
        <end position="1086"/>
    </location>
</feature>
<feature type="region of interest" description="Interaction with TOM1" evidence="4">
    <location>
        <begin position="1125"/>
        <end position="1253"/>
    </location>
</feature>
<feature type="coiled-coil region" evidence="5">
    <location>
        <begin position="864"/>
        <end position="984"/>
    </location>
</feature>
<feature type="binding site" evidence="6">
    <location>
        <begin position="151"/>
        <end position="158"/>
    </location>
    <ligand>
        <name>ATP</name>
        <dbReference type="ChEBI" id="CHEBI:30616"/>
    </ligand>
</feature>
<feature type="modified residue" description="Phosphoserine" evidence="4">
    <location>
        <position position="267"/>
    </location>
</feature>
<feature type="modified residue" description="Phosphothreonine" evidence="4">
    <location>
        <position position="405"/>
    </location>
</feature>
<feature type="modified residue" description="Phosphoserine" evidence="17">
    <location>
        <position position="604"/>
    </location>
</feature>
<feature type="modified residue" description="Phosphoserine" evidence="17">
    <location>
        <position position="1025"/>
    </location>
</feature>
<feature type="modified residue" description="Phosphoserine" evidence="17">
    <location>
        <position position="1123"/>
    </location>
</feature>
<feature type="sequence variant" description="In Snell's waltzer." evidence="14">
    <location>
        <begin position="763"/>
        <end position="1262"/>
    </location>
</feature>
<feature type="helix" evidence="19">
    <location>
        <begin position="840"/>
        <end position="858"/>
    </location>
</feature>
<feature type="helix" evidence="21">
    <location>
        <begin position="877"/>
        <end position="936"/>
    </location>
</feature>
<feature type="helix" evidence="18">
    <location>
        <begin position="1135"/>
        <end position="1139"/>
    </location>
</feature>
<feature type="strand" evidence="20">
    <location>
        <begin position="1144"/>
        <end position="1153"/>
    </location>
</feature>
<feature type="helix" evidence="20">
    <location>
        <begin position="1155"/>
        <end position="1157"/>
    </location>
</feature>
<feature type="helix" evidence="20">
    <location>
        <begin position="1162"/>
        <end position="1164"/>
    </location>
</feature>
<feature type="strand" evidence="20">
    <location>
        <begin position="1167"/>
        <end position="1175"/>
    </location>
</feature>
<feature type="strand" evidence="20">
    <location>
        <begin position="1178"/>
        <end position="1185"/>
    </location>
</feature>
<feature type="strand" evidence="20">
    <location>
        <begin position="1187"/>
        <end position="1189"/>
    </location>
</feature>
<feature type="strand" evidence="20">
    <location>
        <begin position="1192"/>
        <end position="1195"/>
    </location>
</feature>
<feature type="turn" evidence="20">
    <location>
        <begin position="1196"/>
        <end position="1202"/>
    </location>
</feature>
<feature type="helix" evidence="20">
    <location>
        <begin position="1208"/>
        <end position="1211"/>
    </location>
</feature>
<feature type="helix" evidence="20">
    <location>
        <begin position="1213"/>
        <end position="1215"/>
    </location>
</feature>
<feature type="turn" evidence="20">
    <location>
        <begin position="1217"/>
        <end position="1219"/>
    </location>
</feature>
<feature type="helix" evidence="20">
    <location>
        <begin position="1223"/>
        <end position="1232"/>
    </location>
</feature>
<feature type="helix" evidence="20">
    <location>
        <begin position="1235"/>
        <end position="1244"/>
    </location>
</feature>
<feature type="helix" evidence="20">
    <location>
        <begin position="1252"/>
        <end position="1260"/>
    </location>
</feature>
<proteinExistence type="evidence at protein level"/>
<protein>
    <recommendedName>
        <fullName>Unconventional myosin-VI</fullName>
    </recommendedName>
    <alternativeName>
        <fullName evidence="15">Protein twist</fullName>
    </alternativeName>
    <alternativeName>
        <fullName>Unconventional myosin-6</fullName>
    </alternativeName>
</protein>
<name>MYO6_MOUSE</name>
<gene>
    <name type="primary">Myo6</name>
    <name type="synonym">Sv</name>
</gene>